<keyword id="KW-1185">Reference proteome</keyword>
<keyword id="KW-0687">Ribonucleoprotein</keyword>
<keyword id="KW-0689">Ribosomal protein</keyword>
<keyword id="KW-0694">RNA-binding</keyword>
<keyword id="KW-0699">rRNA-binding</keyword>
<name>RL3_GEOMG</name>
<evidence type="ECO:0000255" key="1">
    <source>
        <dbReference type="HAMAP-Rule" id="MF_01325"/>
    </source>
</evidence>
<evidence type="ECO:0000305" key="2"/>
<gene>
    <name evidence="1" type="primary">rplC</name>
    <name type="ordered locus">Gmet_0626</name>
</gene>
<accession>Q39Y06</accession>
<sequence length="210" mass="22692">MKKGLIAKKLGMTQIFADDGRRIPVTVVEAGPCIVLQKKTVETDGYNAIQVGFLAKDADKSGRALVGHCKSAGQGVFTYIREFRVEDVDRYTIGDSITAEIFAPGDYVDVTGTSIGKGFQGVIKRWGFRGGRSSHGSCFHRAPGSIGSSAWPSRVFKNKKMPGQLGNERVTVQRLQVVRVDTADNLLLIRGAIPGAKNGILLLKDSVKAR</sequence>
<proteinExistence type="inferred from homology"/>
<protein>
    <recommendedName>
        <fullName evidence="1">Large ribosomal subunit protein uL3</fullName>
    </recommendedName>
    <alternativeName>
        <fullName evidence="2">50S ribosomal protein L3</fullName>
    </alternativeName>
</protein>
<organism>
    <name type="scientific">Geobacter metallireducens (strain ATCC 53774 / DSM 7210 / GS-15)</name>
    <dbReference type="NCBI Taxonomy" id="269799"/>
    <lineage>
        <taxon>Bacteria</taxon>
        <taxon>Pseudomonadati</taxon>
        <taxon>Thermodesulfobacteriota</taxon>
        <taxon>Desulfuromonadia</taxon>
        <taxon>Geobacterales</taxon>
        <taxon>Geobacteraceae</taxon>
        <taxon>Geobacter</taxon>
    </lineage>
</organism>
<reference key="1">
    <citation type="journal article" date="2009" name="BMC Microbiol.">
        <title>The genome sequence of Geobacter metallireducens: features of metabolism, physiology and regulation common and dissimilar to Geobacter sulfurreducens.</title>
        <authorList>
            <person name="Aklujkar M."/>
            <person name="Krushkal J."/>
            <person name="DiBartolo G."/>
            <person name="Lapidus A."/>
            <person name="Land M.L."/>
            <person name="Lovley D.R."/>
        </authorList>
    </citation>
    <scope>NUCLEOTIDE SEQUENCE [LARGE SCALE GENOMIC DNA]</scope>
    <source>
        <strain>ATCC 53774 / DSM 7210 / GS-15</strain>
    </source>
</reference>
<dbReference type="EMBL" id="CP000148">
    <property type="protein sequence ID" value="ABB30868.1"/>
    <property type="molecule type" value="Genomic_DNA"/>
</dbReference>
<dbReference type="RefSeq" id="WP_011365699.1">
    <property type="nucleotide sequence ID" value="NC_007517.1"/>
</dbReference>
<dbReference type="SMR" id="Q39Y06"/>
<dbReference type="STRING" id="269799.Gmet_0626"/>
<dbReference type="KEGG" id="gme:Gmet_0626"/>
<dbReference type="eggNOG" id="COG0087">
    <property type="taxonomic scope" value="Bacteria"/>
</dbReference>
<dbReference type="HOGENOM" id="CLU_044142_4_1_7"/>
<dbReference type="Proteomes" id="UP000007073">
    <property type="component" value="Chromosome"/>
</dbReference>
<dbReference type="GO" id="GO:0022625">
    <property type="term" value="C:cytosolic large ribosomal subunit"/>
    <property type="evidence" value="ECO:0007669"/>
    <property type="project" value="TreeGrafter"/>
</dbReference>
<dbReference type="GO" id="GO:0019843">
    <property type="term" value="F:rRNA binding"/>
    <property type="evidence" value="ECO:0007669"/>
    <property type="project" value="UniProtKB-UniRule"/>
</dbReference>
<dbReference type="GO" id="GO:0003735">
    <property type="term" value="F:structural constituent of ribosome"/>
    <property type="evidence" value="ECO:0007669"/>
    <property type="project" value="InterPro"/>
</dbReference>
<dbReference type="GO" id="GO:0006412">
    <property type="term" value="P:translation"/>
    <property type="evidence" value="ECO:0007669"/>
    <property type="project" value="UniProtKB-UniRule"/>
</dbReference>
<dbReference type="FunFam" id="2.40.30.10:FF:000004">
    <property type="entry name" value="50S ribosomal protein L3"/>
    <property type="match status" value="1"/>
</dbReference>
<dbReference type="FunFam" id="3.30.160.810:FF:000001">
    <property type="entry name" value="50S ribosomal protein L3"/>
    <property type="match status" value="1"/>
</dbReference>
<dbReference type="Gene3D" id="3.30.160.810">
    <property type="match status" value="1"/>
</dbReference>
<dbReference type="Gene3D" id="2.40.30.10">
    <property type="entry name" value="Translation factors"/>
    <property type="match status" value="1"/>
</dbReference>
<dbReference type="HAMAP" id="MF_01325_B">
    <property type="entry name" value="Ribosomal_uL3_B"/>
    <property type="match status" value="1"/>
</dbReference>
<dbReference type="InterPro" id="IPR000597">
    <property type="entry name" value="Ribosomal_uL3"/>
</dbReference>
<dbReference type="InterPro" id="IPR019927">
    <property type="entry name" value="Ribosomal_uL3_bac/org-type"/>
</dbReference>
<dbReference type="InterPro" id="IPR019926">
    <property type="entry name" value="Ribosomal_uL3_CS"/>
</dbReference>
<dbReference type="InterPro" id="IPR009000">
    <property type="entry name" value="Transl_B-barrel_sf"/>
</dbReference>
<dbReference type="NCBIfam" id="TIGR03625">
    <property type="entry name" value="L3_bact"/>
    <property type="match status" value="1"/>
</dbReference>
<dbReference type="PANTHER" id="PTHR11229">
    <property type="entry name" value="50S RIBOSOMAL PROTEIN L3"/>
    <property type="match status" value="1"/>
</dbReference>
<dbReference type="PANTHER" id="PTHR11229:SF16">
    <property type="entry name" value="LARGE RIBOSOMAL SUBUNIT PROTEIN UL3C"/>
    <property type="match status" value="1"/>
</dbReference>
<dbReference type="Pfam" id="PF00297">
    <property type="entry name" value="Ribosomal_L3"/>
    <property type="match status" value="1"/>
</dbReference>
<dbReference type="SUPFAM" id="SSF50447">
    <property type="entry name" value="Translation proteins"/>
    <property type="match status" value="1"/>
</dbReference>
<dbReference type="PROSITE" id="PS00474">
    <property type="entry name" value="RIBOSOMAL_L3"/>
    <property type="match status" value="1"/>
</dbReference>
<comment type="function">
    <text evidence="1">One of the primary rRNA binding proteins, it binds directly near the 3'-end of the 23S rRNA, where it nucleates assembly of the 50S subunit.</text>
</comment>
<comment type="subunit">
    <text evidence="1">Part of the 50S ribosomal subunit. Forms a cluster with proteins L14 and L19.</text>
</comment>
<comment type="similarity">
    <text evidence="1">Belongs to the universal ribosomal protein uL3 family.</text>
</comment>
<feature type="chain" id="PRO_0000241349" description="Large ribosomal subunit protein uL3">
    <location>
        <begin position="1"/>
        <end position="210"/>
    </location>
</feature>